<proteinExistence type="inferred from homology"/>
<gene>
    <name type="primary">nodC</name>
</gene>
<name>NODC_BRASP</name>
<accession>P04677</accession>
<evidence type="ECO:0000305" key="1"/>
<organism>
    <name type="scientific">Bradyrhizobium sp. (strain ANU 289)</name>
    <dbReference type="NCBI Taxonomy" id="186901"/>
    <lineage>
        <taxon>Bacteria</taxon>
        <taxon>Pseudomonadati</taxon>
        <taxon>Pseudomonadota</taxon>
        <taxon>Alphaproteobacteria</taxon>
        <taxon>Hyphomicrobiales</taxon>
        <taxon>Nitrobacteraceae</taxon>
        <taxon>Bradyrhizobium</taxon>
    </lineage>
</organism>
<protein>
    <recommendedName>
        <fullName>N-acetylglucosaminyltransferase</fullName>
        <ecNumber>2.4.1.-</ecNumber>
    </recommendedName>
    <alternativeName>
        <fullName>Nodulation protein C</fullName>
    </alternativeName>
</protein>
<reference key="1">
    <citation type="journal article" date="1986" name="Nucleic Acids Res.">
        <title>Conserved nodulation genes from the non-legume symbiont Bradyrhizobium sp. (Parasponia).</title>
        <authorList>
            <person name="Scott K.F."/>
        </authorList>
    </citation>
    <scope>NUCLEOTIDE SEQUENCE [GENOMIC DNA]</scope>
</reference>
<dbReference type="EC" id="2.4.1.-"/>
<dbReference type="EMBL" id="X03720">
    <property type="protein sequence ID" value="CAA27350.1"/>
    <property type="molecule type" value="Genomic_DNA"/>
</dbReference>
<dbReference type="SMR" id="P04677"/>
<dbReference type="CAZy" id="GT2">
    <property type="family name" value="Glycosyltransferase Family 2"/>
</dbReference>
<dbReference type="GO" id="GO:0005886">
    <property type="term" value="C:plasma membrane"/>
    <property type="evidence" value="ECO:0007669"/>
    <property type="project" value="UniProtKB-SubCell"/>
</dbReference>
<dbReference type="GO" id="GO:0016757">
    <property type="term" value="F:glycosyltransferase activity"/>
    <property type="evidence" value="ECO:0007669"/>
    <property type="project" value="UniProtKB-KW"/>
</dbReference>
<dbReference type="Gene3D" id="3.90.550.10">
    <property type="entry name" value="Spore Coat Polysaccharide Biosynthesis Protein SpsA, Chain A"/>
    <property type="match status" value="1"/>
</dbReference>
<dbReference type="InterPro" id="IPR001173">
    <property type="entry name" value="Glyco_trans_2-like"/>
</dbReference>
<dbReference type="InterPro" id="IPR029044">
    <property type="entry name" value="Nucleotide-diphossugar_trans"/>
</dbReference>
<dbReference type="PANTHER" id="PTHR43646">
    <property type="entry name" value="GLYCOSYLTRANSFERASE"/>
    <property type="match status" value="1"/>
</dbReference>
<dbReference type="PANTHER" id="PTHR43646:SF2">
    <property type="entry name" value="GLYCOSYLTRANSFERASE 2-LIKE DOMAIN-CONTAINING PROTEIN"/>
    <property type="match status" value="1"/>
</dbReference>
<dbReference type="Pfam" id="PF00535">
    <property type="entry name" value="Glycos_transf_2"/>
    <property type="match status" value="1"/>
</dbReference>
<dbReference type="SUPFAM" id="SSF53448">
    <property type="entry name" value="Nucleotide-diphospho-sugar transferases"/>
    <property type="match status" value="1"/>
</dbReference>
<comment type="function">
    <text>Involved in the synthesis of Nod factor, a sulfated N-acyl-beta-1,4-tetrasaccharide of N-acetylglucosamine which initiates a series of events in the host plant species leading eventually to nodulation.</text>
</comment>
<comment type="subcellular location">
    <subcellularLocation>
        <location evidence="1">Cell membrane</location>
        <topology evidence="1">Peripheral membrane protein</topology>
    </subcellularLocation>
</comment>
<comment type="similarity">
    <text evidence="1">Belongs to the NodC/HAS family.</text>
</comment>
<keyword id="KW-1003">Cell membrane</keyword>
<keyword id="KW-0328">Glycosyltransferase</keyword>
<keyword id="KW-0472">Membrane</keyword>
<keyword id="KW-0536">Nodulation</keyword>
<keyword id="KW-0808">Transferase</keyword>
<sequence>MDLLATTSAVAVSSYALLSTVYKTQALYARPASAAPLRDDPGQAEVALPSVDVIVPSFNEDPNTLSECLASIASQDYAGKLQVHVVDDGSANRDLVGPVHKIFANDPRFRIILLAKNVGKRKAQIAAIRSSSGDLVLNVDSDTILAADVVTKL</sequence>
<feature type="chain" id="PRO_0000197186" description="N-acetylglucosaminyltransferase">
    <location>
        <begin position="1"/>
        <end position="153" status="greater than"/>
    </location>
</feature>
<feature type="non-terminal residue">
    <location>
        <position position="153"/>
    </location>
</feature>